<comment type="function">
    <text evidence="1">Putative tyrosine recombinase. Not involved in the cutting and rejoining of the recombining DNA molecules on dif(SL) site.</text>
</comment>
<comment type="subcellular location">
    <subcellularLocation>
        <location evidence="1">Cytoplasm</location>
    </subcellularLocation>
</comment>
<comment type="similarity">
    <text evidence="1">Belongs to the 'phage' integrase family. XerD-like subfamily.</text>
</comment>
<feature type="chain" id="PRO_0000095439" description="Tyrosine recombinase XerD-like">
    <location>
        <begin position="1"/>
        <end position="245"/>
    </location>
</feature>
<feature type="domain" description="Core-binding (CB)" evidence="3">
    <location>
        <begin position="1"/>
        <end position="72"/>
    </location>
</feature>
<feature type="domain" description="Tyr recombinase" evidence="2">
    <location>
        <begin position="90"/>
        <end position="245"/>
    </location>
</feature>
<feature type="active site" evidence="2">
    <location>
        <position position="151"/>
    </location>
</feature>
<feature type="active site" evidence="2">
    <location>
        <position position="210"/>
    </location>
</feature>
<feature type="active site" description="O-(3'-phospho-DNA)-tyrosine intermediate" evidence="2">
    <location>
        <position position="242"/>
    </location>
</feature>
<gene>
    <name type="ordered locus">SMU_1714c</name>
</gene>
<protein>
    <recommendedName>
        <fullName evidence="1">Tyrosine recombinase XerD-like</fullName>
    </recommendedName>
</protein>
<organism>
    <name type="scientific">Streptococcus mutans serotype c (strain ATCC 700610 / UA159)</name>
    <dbReference type="NCBI Taxonomy" id="210007"/>
    <lineage>
        <taxon>Bacteria</taxon>
        <taxon>Bacillati</taxon>
        <taxon>Bacillota</taxon>
        <taxon>Bacilli</taxon>
        <taxon>Lactobacillales</taxon>
        <taxon>Streptococcaceae</taxon>
        <taxon>Streptococcus</taxon>
    </lineage>
</organism>
<keyword id="KW-0963">Cytoplasm</keyword>
<keyword id="KW-0229">DNA integration</keyword>
<keyword id="KW-0233">DNA recombination</keyword>
<keyword id="KW-0238">DNA-binding</keyword>
<keyword id="KW-1185">Reference proteome</keyword>
<reference key="1">
    <citation type="journal article" date="2002" name="Proc. Natl. Acad. Sci. U.S.A.">
        <title>Genome sequence of Streptococcus mutans UA159, a cariogenic dental pathogen.</title>
        <authorList>
            <person name="Ajdic D.J."/>
            <person name="McShan W.M."/>
            <person name="McLaughlin R.E."/>
            <person name="Savic G."/>
            <person name="Chang J."/>
            <person name="Carson M.B."/>
            <person name="Primeaux C."/>
            <person name="Tian R."/>
            <person name="Kenton S."/>
            <person name="Jia H.G."/>
            <person name="Lin S.P."/>
            <person name="Qian Y."/>
            <person name="Li S."/>
            <person name="Zhu H."/>
            <person name="Najar F.Z."/>
            <person name="Lai H."/>
            <person name="White J."/>
            <person name="Roe B.A."/>
            <person name="Ferretti J.J."/>
        </authorList>
    </citation>
    <scope>NUCLEOTIDE SEQUENCE [LARGE SCALE GENOMIC DNA]</scope>
    <source>
        <strain>ATCC 700610 / UA159</strain>
    </source>
</reference>
<sequence length="245" mass="28515">MITFISKFLASKSLTLNSQKSYLYDLQQFAEIIGEEVTPNKLKLYEQSLADLKVSAKKRKISAVNQFLFFLYENEVLDRFYKIKNKEKLPLLTPAYQEVDLSVLYRKIGDSKGQLIALLIVELGLSPSEIIQLKWENIALEFQVLTIVNEKVMRILEIPQLLLPYLEGEHKAVYLFDNKGEAYSRQWLFQKLNYYLASVDLSQMTAQKLREQYIIKEKNKGTAILDLTRKLGLKSPVTLEKYFKN</sequence>
<proteinExistence type="inferred from homology"/>
<evidence type="ECO:0000255" key="1">
    <source>
        <dbReference type="HAMAP-Rule" id="MF_01817"/>
    </source>
</evidence>
<evidence type="ECO:0000255" key="2">
    <source>
        <dbReference type="PROSITE-ProRule" id="PRU01246"/>
    </source>
</evidence>
<evidence type="ECO:0000255" key="3">
    <source>
        <dbReference type="PROSITE-ProRule" id="PRU01248"/>
    </source>
</evidence>
<name>XERDL_STRMU</name>
<dbReference type="EMBL" id="AE014133">
    <property type="protein sequence ID" value="AAN59349.1"/>
    <property type="molecule type" value="Genomic_DNA"/>
</dbReference>
<dbReference type="RefSeq" id="NP_722043.1">
    <property type="nucleotide sequence ID" value="NC_004350.2"/>
</dbReference>
<dbReference type="SMR" id="Q8DSQ9"/>
<dbReference type="STRING" id="210007.SMU_1714c"/>
<dbReference type="KEGG" id="smu:SMU_1714c"/>
<dbReference type="PATRIC" id="fig|210007.7.peg.1532"/>
<dbReference type="eggNOG" id="COG0582">
    <property type="taxonomic scope" value="Bacteria"/>
</dbReference>
<dbReference type="HOGENOM" id="CLU_1128554_0_0_9"/>
<dbReference type="OrthoDB" id="2241487at2"/>
<dbReference type="PhylomeDB" id="Q8DSQ9"/>
<dbReference type="Proteomes" id="UP000002512">
    <property type="component" value="Chromosome"/>
</dbReference>
<dbReference type="GO" id="GO:0005737">
    <property type="term" value="C:cytoplasm"/>
    <property type="evidence" value="ECO:0007669"/>
    <property type="project" value="UniProtKB-SubCell"/>
</dbReference>
<dbReference type="GO" id="GO:0003677">
    <property type="term" value="F:DNA binding"/>
    <property type="evidence" value="ECO:0007669"/>
    <property type="project" value="UniProtKB-KW"/>
</dbReference>
<dbReference type="GO" id="GO:0009037">
    <property type="term" value="F:tyrosine-based site-specific recombinase activity"/>
    <property type="evidence" value="ECO:0007669"/>
    <property type="project" value="UniProtKB-UniRule"/>
</dbReference>
<dbReference type="GO" id="GO:0006313">
    <property type="term" value="P:DNA transposition"/>
    <property type="evidence" value="ECO:0007669"/>
    <property type="project" value="UniProtKB-UniRule"/>
</dbReference>
<dbReference type="CDD" id="cd01190">
    <property type="entry name" value="INT_StrepXerD_C_like"/>
    <property type="match status" value="1"/>
</dbReference>
<dbReference type="Gene3D" id="1.10.150.130">
    <property type="match status" value="1"/>
</dbReference>
<dbReference type="Gene3D" id="1.10.443.10">
    <property type="entry name" value="Intergrase catalytic core"/>
    <property type="match status" value="1"/>
</dbReference>
<dbReference type="HAMAP" id="MF_01817">
    <property type="entry name" value="Recomb_XerD_like"/>
    <property type="match status" value="1"/>
</dbReference>
<dbReference type="InterPro" id="IPR044068">
    <property type="entry name" value="CB"/>
</dbReference>
<dbReference type="InterPro" id="IPR011010">
    <property type="entry name" value="DNA_brk_join_enz"/>
</dbReference>
<dbReference type="InterPro" id="IPR013762">
    <property type="entry name" value="Integrase-like_cat_sf"/>
</dbReference>
<dbReference type="InterPro" id="IPR002104">
    <property type="entry name" value="Integrase_catalytic"/>
</dbReference>
<dbReference type="InterPro" id="IPR010998">
    <property type="entry name" value="Integrase_recombinase_N"/>
</dbReference>
<dbReference type="InterPro" id="IPR020876">
    <property type="entry name" value="Tyrosine_recombinase_XerD-like"/>
</dbReference>
<dbReference type="NCBIfam" id="NF002685">
    <property type="entry name" value="PRK02436.1"/>
    <property type="match status" value="1"/>
</dbReference>
<dbReference type="SUPFAM" id="SSF56349">
    <property type="entry name" value="DNA breaking-rejoining enzymes"/>
    <property type="match status" value="1"/>
</dbReference>
<dbReference type="PROSITE" id="PS51900">
    <property type="entry name" value="CB"/>
    <property type="match status" value="1"/>
</dbReference>
<dbReference type="PROSITE" id="PS51898">
    <property type="entry name" value="TYR_RECOMBINASE"/>
    <property type="match status" value="1"/>
</dbReference>
<accession>Q8DSQ9</accession>